<reference key="1">
    <citation type="journal article" date="2001" name="Proc. Natl. Acad. Sci. U.S.A.">
        <title>The complete sequence of the 1,683-kb pSymB megaplasmid from the N2-fixing endosymbiont Sinorhizobium meliloti.</title>
        <authorList>
            <person name="Finan T.M."/>
            <person name="Weidner S."/>
            <person name="Wong K."/>
            <person name="Buhrmester J."/>
            <person name="Chain P."/>
            <person name="Vorhoelter F.J."/>
            <person name="Hernandez-Lucas I."/>
            <person name="Becker A."/>
            <person name="Cowie A."/>
            <person name="Gouzy J."/>
            <person name="Golding B."/>
            <person name="Puehler A."/>
        </authorList>
    </citation>
    <scope>NUCLEOTIDE SEQUENCE [LARGE SCALE GENOMIC DNA]</scope>
    <source>
        <strain>1021</strain>
    </source>
</reference>
<reference key="2">
    <citation type="journal article" date="2001" name="Science">
        <title>The composite genome of the legume symbiont Sinorhizobium meliloti.</title>
        <authorList>
            <person name="Galibert F."/>
            <person name="Finan T.M."/>
            <person name="Long S.R."/>
            <person name="Puehler A."/>
            <person name="Abola P."/>
            <person name="Ampe F."/>
            <person name="Barloy-Hubler F."/>
            <person name="Barnett M.J."/>
            <person name="Becker A."/>
            <person name="Boistard P."/>
            <person name="Bothe G."/>
            <person name="Boutry M."/>
            <person name="Bowser L."/>
            <person name="Buhrmester J."/>
            <person name="Cadieu E."/>
            <person name="Capela D."/>
            <person name="Chain P."/>
            <person name="Cowie A."/>
            <person name="Davis R.W."/>
            <person name="Dreano S."/>
            <person name="Federspiel N.A."/>
            <person name="Fisher R.F."/>
            <person name="Gloux S."/>
            <person name="Godrie T."/>
            <person name="Goffeau A."/>
            <person name="Golding B."/>
            <person name="Gouzy J."/>
            <person name="Gurjal M."/>
            <person name="Hernandez-Lucas I."/>
            <person name="Hong A."/>
            <person name="Huizar L."/>
            <person name="Hyman R.W."/>
            <person name="Jones T."/>
            <person name="Kahn D."/>
            <person name="Kahn M.L."/>
            <person name="Kalman S."/>
            <person name="Keating D.H."/>
            <person name="Kiss E."/>
            <person name="Komp C."/>
            <person name="Lelaure V."/>
            <person name="Masuy D."/>
            <person name="Palm C."/>
            <person name="Peck M.C."/>
            <person name="Pohl T.M."/>
            <person name="Portetelle D."/>
            <person name="Purnelle B."/>
            <person name="Ramsperger U."/>
            <person name="Surzycki R."/>
            <person name="Thebault P."/>
            <person name="Vandenbol M."/>
            <person name="Vorhoelter F.J."/>
            <person name="Weidner S."/>
            <person name="Wells D.H."/>
            <person name="Wong K."/>
            <person name="Yeh K.-C."/>
            <person name="Batut J."/>
        </authorList>
    </citation>
    <scope>NUCLEOTIDE SEQUENCE [LARGE SCALE GENOMIC DNA]</scope>
    <source>
        <strain>1021</strain>
    </source>
</reference>
<gene>
    <name evidence="1" type="primary">htpG</name>
    <name type="ordered locus">RB0849</name>
    <name type="ORF">SMb21183</name>
</gene>
<evidence type="ECO:0000255" key="1">
    <source>
        <dbReference type="HAMAP-Rule" id="MF_00505"/>
    </source>
</evidence>
<feature type="chain" id="PRO_0000063008" description="Chaperone protein HtpG">
    <location>
        <begin position="1"/>
        <end position="629"/>
    </location>
</feature>
<feature type="region of interest" description="A; substrate-binding" evidence="1">
    <location>
        <begin position="1"/>
        <end position="335"/>
    </location>
</feature>
<feature type="region of interest" description="B" evidence="1">
    <location>
        <begin position="336"/>
        <end position="551"/>
    </location>
</feature>
<feature type="region of interest" description="C" evidence="1">
    <location>
        <begin position="552"/>
        <end position="629"/>
    </location>
</feature>
<comment type="function">
    <text evidence="1">Molecular chaperone. Has ATPase activity.</text>
</comment>
<comment type="subunit">
    <text evidence="1">Homodimer.</text>
</comment>
<comment type="subcellular location">
    <subcellularLocation>
        <location evidence="1">Cytoplasm</location>
    </subcellularLocation>
</comment>
<comment type="similarity">
    <text evidence="1">Belongs to the heat shock protein 90 family.</text>
</comment>
<protein>
    <recommendedName>
        <fullName evidence="1">Chaperone protein HtpG</fullName>
    </recommendedName>
    <alternativeName>
        <fullName evidence="1">Heat shock protein HtpG</fullName>
    </alternativeName>
    <alternativeName>
        <fullName evidence="1">High temperature protein G</fullName>
    </alternativeName>
</protein>
<name>HTPG_RHIME</name>
<proteinExistence type="inferred from homology"/>
<organism>
    <name type="scientific">Rhizobium meliloti (strain 1021)</name>
    <name type="common">Ensifer meliloti</name>
    <name type="synonym">Sinorhizobium meliloti</name>
    <dbReference type="NCBI Taxonomy" id="266834"/>
    <lineage>
        <taxon>Bacteria</taxon>
        <taxon>Pseudomonadati</taxon>
        <taxon>Pseudomonadota</taxon>
        <taxon>Alphaproteobacteria</taxon>
        <taxon>Hyphomicrobiales</taxon>
        <taxon>Rhizobiaceae</taxon>
        <taxon>Sinorhizobium/Ensifer group</taxon>
        <taxon>Sinorhizobium</taxon>
    </lineage>
</organism>
<dbReference type="EMBL" id="AL591985">
    <property type="protein sequence ID" value="CAC49249.1"/>
    <property type="molecule type" value="Genomic_DNA"/>
</dbReference>
<dbReference type="PIR" id="A95948">
    <property type="entry name" value="A95948"/>
</dbReference>
<dbReference type="RefSeq" id="NP_437389.1">
    <property type="nucleotide sequence ID" value="NC_003078.1"/>
</dbReference>
<dbReference type="RefSeq" id="WP_010975705.1">
    <property type="nucleotide sequence ID" value="NC_003078.1"/>
</dbReference>
<dbReference type="SMR" id="P58477"/>
<dbReference type="EnsemblBacteria" id="CAC49249">
    <property type="protein sequence ID" value="CAC49249"/>
    <property type="gene ID" value="SM_b21183"/>
</dbReference>
<dbReference type="KEGG" id="sme:SM_b21183"/>
<dbReference type="PATRIC" id="fig|266834.11.peg.5780"/>
<dbReference type="eggNOG" id="COG0326">
    <property type="taxonomic scope" value="Bacteria"/>
</dbReference>
<dbReference type="HOGENOM" id="CLU_006684_3_0_5"/>
<dbReference type="OrthoDB" id="9802640at2"/>
<dbReference type="Proteomes" id="UP000001976">
    <property type="component" value="Plasmid pSymB"/>
</dbReference>
<dbReference type="GO" id="GO:0005737">
    <property type="term" value="C:cytoplasm"/>
    <property type="evidence" value="ECO:0007669"/>
    <property type="project" value="UniProtKB-SubCell"/>
</dbReference>
<dbReference type="GO" id="GO:0005524">
    <property type="term" value="F:ATP binding"/>
    <property type="evidence" value="ECO:0007669"/>
    <property type="project" value="UniProtKB-UniRule"/>
</dbReference>
<dbReference type="GO" id="GO:0016887">
    <property type="term" value="F:ATP hydrolysis activity"/>
    <property type="evidence" value="ECO:0007669"/>
    <property type="project" value="InterPro"/>
</dbReference>
<dbReference type="GO" id="GO:0140662">
    <property type="term" value="F:ATP-dependent protein folding chaperone"/>
    <property type="evidence" value="ECO:0007669"/>
    <property type="project" value="InterPro"/>
</dbReference>
<dbReference type="GO" id="GO:0051082">
    <property type="term" value="F:unfolded protein binding"/>
    <property type="evidence" value="ECO:0007669"/>
    <property type="project" value="UniProtKB-UniRule"/>
</dbReference>
<dbReference type="CDD" id="cd16927">
    <property type="entry name" value="HATPase_Hsp90-like"/>
    <property type="match status" value="1"/>
</dbReference>
<dbReference type="FunFam" id="3.30.565.10:FF:000009">
    <property type="entry name" value="Molecular chaperone HtpG"/>
    <property type="match status" value="1"/>
</dbReference>
<dbReference type="Gene3D" id="3.30.230.80">
    <property type="match status" value="1"/>
</dbReference>
<dbReference type="Gene3D" id="3.40.50.11260">
    <property type="match status" value="1"/>
</dbReference>
<dbReference type="Gene3D" id="1.20.120.790">
    <property type="entry name" value="Heat shock protein 90, C-terminal domain"/>
    <property type="match status" value="1"/>
</dbReference>
<dbReference type="Gene3D" id="3.30.565.10">
    <property type="entry name" value="Histidine kinase-like ATPase, C-terminal domain"/>
    <property type="match status" value="1"/>
</dbReference>
<dbReference type="HAMAP" id="MF_00505">
    <property type="entry name" value="HSP90"/>
    <property type="match status" value="1"/>
</dbReference>
<dbReference type="InterPro" id="IPR036890">
    <property type="entry name" value="HATPase_C_sf"/>
</dbReference>
<dbReference type="InterPro" id="IPR037196">
    <property type="entry name" value="HSP90_C"/>
</dbReference>
<dbReference type="InterPro" id="IPR001404">
    <property type="entry name" value="Hsp90_fam"/>
</dbReference>
<dbReference type="InterPro" id="IPR020575">
    <property type="entry name" value="Hsp90_N"/>
</dbReference>
<dbReference type="InterPro" id="IPR020568">
    <property type="entry name" value="Ribosomal_Su5_D2-typ_SF"/>
</dbReference>
<dbReference type="NCBIfam" id="NF003555">
    <property type="entry name" value="PRK05218.1"/>
    <property type="match status" value="1"/>
</dbReference>
<dbReference type="PANTHER" id="PTHR11528">
    <property type="entry name" value="HEAT SHOCK PROTEIN 90 FAMILY MEMBER"/>
    <property type="match status" value="1"/>
</dbReference>
<dbReference type="Pfam" id="PF13589">
    <property type="entry name" value="HATPase_c_3"/>
    <property type="match status" value="1"/>
</dbReference>
<dbReference type="Pfam" id="PF00183">
    <property type="entry name" value="HSP90"/>
    <property type="match status" value="1"/>
</dbReference>
<dbReference type="PIRSF" id="PIRSF002583">
    <property type="entry name" value="Hsp90"/>
    <property type="match status" value="1"/>
</dbReference>
<dbReference type="PRINTS" id="PR00775">
    <property type="entry name" value="HEATSHOCK90"/>
</dbReference>
<dbReference type="SMART" id="SM00387">
    <property type="entry name" value="HATPase_c"/>
    <property type="match status" value="1"/>
</dbReference>
<dbReference type="SUPFAM" id="SSF55874">
    <property type="entry name" value="ATPase domain of HSP90 chaperone/DNA topoisomerase II/histidine kinase"/>
    <property type="match status" value="1"/>
</dbReference>
<dbReference type="SUPFAM" id="SSF110942">
    <property type="entry name" value="HSP90 C-terminal domain"/>
    <property type="match status" value="1"/>
</dbReference>
<dbReference type="SUPFAM" id="SSF54211">
    <property type="entry name" value="Ribosomal protein S5 domain 2-like"/>
    <property type="match status" value="1"/>
</dbReference>
<geneLocation type="plasmid">
    <name>pSymB</name>
    <name>megaplasmid 2</name>
</geneLocation>
<sequence length="629" mass="69295">MSEVETSVEKHVFEADVAKLLHLMVHSVYSDKNVFLRELISNAADACEKLRYEAIVAPELLGSDPASRITLTLDEENARLVIEDNGIGMGRDELVESLGTIARSGTRAFMERIEAAQNKDGAQLIGQFGVGFYSAFMVADNVDVVSRRAGTDKAWHWASDGKGSYTVSAVDLADAPARGTRITLHLMDEAKTFTSRWTVERIVKEQSGHVPVPISIVEKPGAEPAQVADGTALWTKQKSEISKDDYTDFYRGVAGQYDEPALTVHFRAEGRHEYTALAFVPGSKPFDLFDPDRKGRMKLYVKRVFITDEAELLPRYLRFVRGLVDTADLPLNVSREMIQESPLLANIRKGLTNRVLTSIEKLAESDSEAFAKIWENFGSVIKEGIYEDFERRGQLLALSRFRTTADDDKPRALSDYVKEMKEGQSAIYYLTGDNLAQLKASPQLEGFRARGIEVLLLTCPVDSFWVTTAPDFDGKPFKSITQGAADLAGIAKNDDAAAASPEAGAAVTDFVSFARETLGEAVSDVRTSDRLTESAVCLVAPEQGPDRQLQKMLQDAGRIEGAPKPVLEINPGHQLIAALATCPSEDKAFREDAVKLLLDQARVLDGDRPEDPRAFAERLSRVFGRALKE</sequence>
<keyword id="KW-0067">ATP-binding</keyword>
<keyword id="KW-0143">Chaperone</keyword>
<keyword id="KW-0963">Cytoplasm</keyword>
<keyword id="KW-0547">Nucleotide-binding</keyword>
<keyword id="KW-0614">Plasmid</keyword>
<keyword id="KW-1185">Reference proteome</keyword>
<keyword id="KW-0346">Stress response</keyword>
<accession>P58477</accession>